<comment type="function">
    <text evidence="1">TEM-type are the most prevalent beta-lactamases in enterobacteria; they hydrolyze the beta-lactam bond in susceptible beta-lactam antibiotics, thus conferring resistance to penicillins and cephalosporins.</text>
</comment>
<comment type="catalytic activity">
    <reaction evidence="2">
        <text>a beta-lactam + H2O = a substituted beta-amino acid</text>
        <dbReference type="Rhea" id="RHEA:20401"/>
        <dbReference type="ChEBI" id="CHEBI:15377"/>
        <dbReference type="ChEBI" id="CHEBI:35627"/>
        <dbReference type="ChEBI" id="CHEBI:140347"/>
        <dbReference type="EC" id="3.5.2.6"/>
    </reaction>
</comment>
<comment type="miscellaneous">
    <text evidence="4">The class A beta-lactamase family has a specific amino-acid numbering system, sometimes called Ambler or ABL numbering and often misspelt as Amber. A multiple sequence alignment was used to derive a consensus sequence and then the consensus was numbered taking into account insertions and deletions. This allows use of identical numbers, e.g. for active site residues, despite differences in protein length. UniProt always uses natural numbering of residues, hence there appear to be differences in numbering between this entry and some papers.</text>
</comment>
<comment type="similarity">
    <text evidence="3">Belongs to the class-A beta-lactamase family.</text>
</comment>
<accession>P62594</accession>
<accession>P00810</accession>
<accession>Q47313</accession>
<sequence>MSIQHFRVALIPFFAAFCLPVFAHPETLVKVKDAEDQLGARVGYIELDLNSGKILESFRPEERFPMMSTFKVLLCGAVLSRVDAGQEQLGRRIHYSQNDLVEYSPVTEKHLTDGMTVRELCSAAITMSDNTAANLLLTTIGGPKELTAFLHNMGDHVTRLDRWEPELNEAIPNDERDTTMPAAMATTLRKLLTGELLTLASRQQLIDWMEADKVAGPLLRSALPAGWFIADKSGAGERGSRGIIAALGPDGKPSRIVVIYTTGSQATMDERNRQIAEIGASLIKHW</sequence>
<keyword id="KW-0046">Antibiotic resistance</keyword>
<keyword id="KW-1015">Disulfide bond</keyword>
<keyword id="KW-0378">Hydrolase</keyword>
<keyword id="KW-0614">Plasmid</keyword>
<keyword id="KW-0732">Signal</keyword>
<protein>
    <recommendedName>
        <fullName>Beta-lactamase TEM</fullName>
        <ecNumber>3.5.2.6</ecNumber>
    </recommendedName>
    <alternativeName>
        <fullName>Penicillinase</fullName>
    </alternativeName>
</protein>
<gene>
    <name type="primary">bla</name>
    <name type="ordered locus">HCM1.216</name>
</gene>
<reference key="1">
    <citation type="journal article" date="2001" name="Nature">
        <title>Complete genome sequence of a multiple drug resistant Salmonella enterica serovar Typhi CT18.</title>
        <authorList>
            <person name="Parkhill J."/>
            <person name="Dougan G."/>
            <person name="James K.D."/>
            <person name="Thomson N.R."/>
            <person name="Pickard D."/>
            <person name="Wain J."/>
            <person name="Churcher C.M."/>
            <person name="Mungall K.L."/>
            <person name="Bentley S.D."/>
            <person name="Holden M.T.G."/>
            <person name="Sebaihia M."/>
            <person name="Baker S."/>
            <person name="Basham D."/>
            <person name="Brooks K."/>
            <person name="Chillingworth T."/>
            <person name="Connerton P."/>
            <person name="Cronin A."/>
            <person name="Davis P."/>
            <person name="Davies R.M."/>
            <person name="Dowd L."/>
            <person name="White N."/>
            <person name="Farrar J."/>
            <person name="Feltwell T."/>
            <person name="Hamlin N."/>
            <person name="Haque A."/>
            <person name="Hien T.T."/>
            <person name="Holroyd S."/>
            <person name="Jagels K."/>
            <person name="Krogh A."/>
            <person name="Larsen T.S."/>
            <person name="Leather S."/>
            <person name="Moule S."/>
            <person name="O'Gaora P."/>
            <person name="Parry C."/>
            <person name="Quail M.A."/>
            <person name="Rutherford K.M."/>
            <person name="Simmonds M."/>
            <person name="Skelton J."/>
            <person name="Stevens K."/>
            <person name="Whitehead S."/>
            <person name="Barrell B.G."/>
        </authorList>
    </citation>
    <scope>NUCLEOTIDE SEQUENCE [LARGE SCALE GENOMIC DNA]</scope>
    <source>
        <strain>CT18</strain>
    </source>
</reference>
<reference key="2">
    <citation type="journal article" date="1991" name="Biochem. J.">
        <title>A standard numbering scheme for the class A beta-lactamases.</title>
        <authorList>
            <person name="Ambler R.P."/>
            <person name="Coulson A.F."/>
            <person name="Frere J.M."/>
            <person name="Ghuysen J.M."/>
            <person name="Joris B."/>
            <person name="Forsman M."/>
            <person name="Levesque R.C."/>
            <person name="Tiraby G."/>
            <person name="Waley S.G."/>
        </authorList>
    </citation>
    <scope>AMINO ACID NUMBERING SCHEME</scope>
</reference>
<name>BLAT_SALTI</name>
<evidence type="ECO:0000250" key="1"/>
<evidence type="ECO:0000255" key="2">
    <source>
        <dbReference type="PROSITE-ProRule" id="PRU10101"/>
    </source>
</evidence>
<evidence type="ECO:0000305" key="3"/>
<evidence type="ECO:0000305" key="4">
    <source>
    </source>
</evidence>
<feature type="signal peptide" evidence="1">
    <location>
        <begin position="1"/>
        <end position="23"/>
    </location>
</feature>
<feature type="chain" id="PRO_0000016979" description="Beta-lactamase TEM">
    <location>
        <begin position="24"/>
        <end position="286"/>
    </location>
</feature>
<feature type="active site" description="Acyl-ester intermediate" evidence="2">
    <location>
        <position position="68"/>
    </location>
</feature>
<feature type="active site" description="Proton acceptor" evidence="1">
    <location>
        <position position="166"/>
    </location>
</feature>
<feature type="binding site" evidence="1">
    <location>
        <begin position="232"/>
        <end position="234"/>
    </location>
    <ligand>
        <name>substrate</name>
    </ligand>
</feature>
<feature type="disulfide bond" evidence="1">
    <location>
        <begin position="75"/>
        <end position="121"/>
    </location>
</feature>
<proteinExistence type="inferred from homology"/>
<geneLocation type="plasmid">
    <name>pHCM1</name>
</geneLocation>
<dbReference type="EC" id="3.5.2.6"/>
<dbReference type="EMBL" id="AL513383">
    <property type="protein sequence ID" value="CAD09800.1"/>
    <property type="molecule type" value="Genomic_DNA"/>
</dbReference>
<dbReference type="RefSeq" id="NP_569411.1">
    <property type="nucleotide sequence ID" value="NC_003384.1"/>
</dbReference>
<dbReference type="BMRB" id="P62594"/>
<dbReference type="SMR" id="P62594"/>
<dbReference type="DrugBank" id="DB02614">
    <property type="generic name" value="1(R)-1-Acetamido-2-(3-Carboxyphenyl)Ethyl Boronic Acid"/>
</dbReference>
<dbReference type="DrugBank" id="DB04430">
    <property type="generic name" value="3-(4-Phenylamino-Phenylamino)-2-(1h-Tetrazol-5-Yl)-Acrylonitrile"/>
</dbReference>
<dbReference type="DrugBank" id="DB02841">
    <property type="generic name" value="[(2-Ethoxy-1-Naphthoyl)Amino]Methylboronic Acid"/>
</dbReference>
<dbReference type="DrugBank" id="DB02642">
    <property type="generic name" value="[[N-(Benzyloxycarbonyl)Amino]Methyl]Phosphate"/>
</dbReference>
<dbReference type="DrugBank" id="DB03640">
    <property type="generic name" value="Beta-Hydroxyaspartic Acid"/>
</dbReference>
<dbReference type="DrugBank" id="DB04037">
    <property type="generic name" value="N,N-Bis(4-Chlorobenzyl)-1h-1,2,3,4-Tetraazol-5-Amine"/>
</dbReference>
<dbReference type="DrugBank" id="DB01606">
    <property type="generic name" value="Tazobactam"/>
</dbReference>
<dbReference type="DrugCentral" id="P62594"/>
<dbReference type="CARD" id="ARO:3000873">
    <property type="molecule name" value="TEM-1"/>
    <property type="mechanism identifier" value="ARO:0001004"/>
    <property type="mechanism name" value="antibiotic inactivation"/>
</dbReference>
<dbReference type="KEGG" id="sty:HCM1.216"/>
<dbReference type="PATRIC" id="fig|220341.7.peg.5236"/>
<dbReference type="HOGENOM" id="CLU_031960_6_0_6"/>
<dbReference type="OMA" id="EWMKGNA"/>
<dbReference type="Proteomes" id="UP000000541">
    <property type="component" value="Plasmid pHCM1"/>
</dbReference>
<dbReference type="GO" id="GO:0008800">
    <property type="term" value="F:beta-lactamase activity"/>
    <property type="evidence" value="ECO:0007669"/>
    <property type="project" value="UniProtKB-EC"/>
</dbReference>
<dbReference type="GO" id="GO:0030655">
    <property type="term" value="P:beta-lactam antibiotic catabolic process"/>
    <property type="evidence" value="ECO:0007669"/>
    <property type="project" value="InterPro"/>
</dbReference>
<dbReference type="GO" id="GO:0046677">
    <property type="term" value="P:response to antibiotic"/>
    <property type="evidence" value="ECO:0007669"/>
    <property type="project" value="UniProtKB-KW"/>
</dbReference>
<dbReference type="Gene3D" id="3.40.710.10">
    <property type="entry name" value="DD-peptidase/beta-lactamase superfamily"/>
    <property type="match status" value="1"/>
</dbReference>
<dbReference type="InterPro" id="IPR012338">
    <property type="entry name" value="Beta-lactam/transpept-like"/>
</dbReference>
<dbReference type="InterPro" id="IPR045155">
    <property type="entry name" value="Beta-lactam_cat"/>
</dbReference>
<dbReference type="InterPro" id="IPR000871">
    <property type="entry name" value="Beta-lactam_class-A"/>
</dbReference>
<dbReference type="InterPro" id="IPR023650">
    <property type="entry name" value="Beta-lactam_class-A_AS"/>
</dbReference>
<dbReference type="NCBIfam" id="NF033103">
    <property type="entry name" value="bla_class_A"/>
    <property type="match status" value="1"/>
</dbReference>
<dbReference type="NCBIfam" id="NF000531">
    <property type="entry name" value="blaTEM"/>
    <property type="match status" value="1"/>
</dbReference>
<dbReference type="PANTHER" id="PTHR35333">
    <property type="entry name" value="BETA-LACTAMASE"/>
    <property type="match status" value="1"/>
</dbReference>
<dbReference type="PANTHER" id="PTHR35333:SF3">
    <property type="entry name" value="BETA-LACTAMASE-TYPE TRANSPEPTIDASE FOLD CONTAINING PROTEIN"/>
    <property type="match status" value="1"/>
</dbReference>
<dbReference type="Pfam" id="PF13354">
    <property type="entry name" value="Beta-lactamase2"/>
    <property type="match status" value="1"/>
</dbReference>
<dbReference type="PRINTS" id="PR00118">
    <property type="entry name" value="BLACTAMASEA"/>
</dbReference>
<dbReference type="SUPFAM" id="SSF56601">
    <property type="entry name" value="beta-lactamase/transpeptidase-like"/>
    <property type="match status" value="1"/>
</dbReference>
<dbReference type="PROSITE" id="PS00146">
    <property type="entry name" value="BETA_LACTAMASE_A"/>
    <property type="match status" value="1"/>
</dbReference>
<organism>
    <name type="scientific">Salmonella typhi</name>
    <dbReference type="NCBI Taxonomy" id="90370"/>
    <lineage>
        <taxon>Bacteria</taxon>
        <taxon>Pseudomonadati</taxon>
        <taxon>Pseudomonadota</taxon>
        <taxon>Gammaproteobacteria</taxon>
        <taxon>Enterobacterales</taxon>
        <taxon>Enterobacteriaceae</taxon>
        <taxon>Salmonella</taxon>
    </lineage>
</organism>